<name>NTPPA_MYXXD</name>
<feature type="chain" id="PRO_0000267347" description="dTTP/UTP pyrophosphatase">
    <location>
        <begin position="1"/>
        <end position="196"/>
    </location>
</feature>
<feature type="active site" description="Proton acceptor" evidence="1">
    <location>
        <position position="73"/>
    </location>
</feature>
<feature type="site" description="Important for substrate specificity" evidence="1">
    <location>
        <position position="16"/>
    </location>
</feature>
<feature type="site" description="Important for substrate specificity" evidence="1">
    <location>
        <position position="74"/>
    </location>
</feature>
<feature type="site" description="Important for substrate specificity" evidence="1">
    <location>
        <position position="155"/>
    </location>
</feature>
<accession>Q1D912</accession>
<proteinExistence type="inferred from homology"/>
<reference key="1">
    <citation type="journal article" date="2006" name="Proc. Natl. Acad. Sci. U.S.A.">
        <title>Evolution of sensory complexity recorded in a myxobacterial genome.</title>
        <authorList>
            <person name="Goldman B.S."/>
            <person name="Nierman W.C."/>
            <person name="Kaiser D."/>
            <person name="Slater S.C."/>
            <person name="Durkin A.S."/>
            <person name="Eisen J.A."/>
            <person name="Ronning C.M."/>
            <person name="Barbazuk W.B."/>
            <person name="Blanchard M."/>
            <person name="Field C."/>
            <person name="Halling C."/>
            <person name="Hinkle G."/>
            <person name="Iartchuk O."/>
            <person name="Kim H.S."/>
            <person name="Mackenzie C."/>
            <person name="Madupu R."/>
            <person name="Miller N."/>
            <person name="Shvartsbeyn A."/>
            <person name="Sullivan S.A."/>
            <person name="Vaudin M."/>
            <person name="Wiegand R."/>
            <person name="Kaplan H.B."/>
        </authorList>
    </citation>
    <scope>NUCLEOTIDE SEQUENCE [LARGE SCALE GENOMIC DNA]</scope>
    <source>
        <strain>DK1622</strain>
    </source>
</reference>
<sequence length="196" mass="20709">MNADQTLLVLASASPRRRELLAQLDIRFTVSAADIDETPHAGEAAEAYVGRLAREKAHVVASRHPGAWVLAADTTVALGAELLGKPRDAEEAQAMLTRLSGRTHDVYTGVALAGRHEETLVVRTRVTFRALSSGEMSWYANSGEPLDKAGAYAIQGKGGFLVAGVEGSTSNVVGLPLGETVALLERAGLPLPWRAS</sequence>
<organism>
    <name type="scientific">Myxococcus xanthus (strain DK1622)</name>
    <dbReference type="NCBI Taxonomy" id="246197"/>
    <lineage>
        <taxon>Bacteria</taxon>
        <taxon>Pseudomonadati</taxon>
        <taxon>Myxococcota</taxon>
        <taxon>Myxococcia</taxon>
        <taxon>Myxococcales</taxon>
        <taxon>Cystobacterineae</taxon>
        <taxon>Myxococcaceae</taxon>
        <taxon>Myxococcus</taxon>
    </lineage>
</organism>
<protein>
    <recommendedName>
        <fullName evidence="1">dTTP/UTP pyrophosphatase</fullName>
        <shortName evidence="1">dTTPase/UTPase</shortName>
        <ecNumber evidence="1">3.6.1.9</ecNumber>
    </recommendedName>
    <alternativeName>
        <fullName evidence="1">Nucleoside triphosphate pyrophosphatase</fullName>
    </alternativeName>
    <alternativeName>
        <fullName evidence="1">Nucleotide pyrophosphatase</fullName>
        <shortName evidence="1">Nucleotide PPase</shortName>
    </alternativeName>
</protein>
<keyword id="KW-0963">Cytoplasm</keyword>
<keyword id="KW-0378">Hydrolase</keyword>
<keyword id="KW-0546">Nucleotide metabolism</keyword>
<keyword id="KW-1185">Reference proteome</keyword>
<gene>
    <name type="ordered locus">MXAN_2642</name>
</gene>
<dbReference type="EC" id="3.6.1.9" evidence="1"/>
<dbReference type="EMBL" id="CP000113">
    <property type="protein sequence ID" value="ABF91552.1"/>
    <property type="molecule type" value="Genomic_DNA"/>
</dbReference>
<dbReference type="SMR" id="Q1D912"/>
<dbReference type="STRING" id="246197.MXAN_2642"/>
<dbReference type="EnsemblBacteria" id="ABF91552">
    <property type="protein sequence ID" value="ABF91552"/>
    <property type="gene ID" value="MXAN_2642"/>
</dbReference>
<dbReference type="KEGG" id="mxa:MXAN_2642"/>
<dbReference type="eggNOG" id="COG0424">
    <property type="taxonomic scope" value="Bacteria"/>
</dbReference>
<dbReference type="HOGENOM" id="CLU_040416_2_1_7"/>
<dbReference type="Proteomes" id="UP000002402">
    <property type="component" value="Chromosome"/>
</dbReference>
<dbReference type="GO" id="GO:0005737">
    <property type="term" value="C:cytoplasm"/>
    <property type="evidence" value="ECO:0007669"/>
    <property type="project" value="UniProtKB-SubCell"/>
</dbReference>
<dbReference type="GO" id="GO:0036218">
    <property type="term" value="F:dTTP diphosphatase activity"/>
    <property type="evidence" value="ECO:0007669"/>
    <property type="project" value="RHEA"/>
</dbReference>
<dbReference type="GO" id="GO:0036221">
    <property type="term" value="F:UTP diphosphatase activity"/>
    <property type="evidence" value="ECO:0007669"/>
    <property type="project" value="RHEA"/>
</dbReference>
<dbReference type="GO" id="GO:0009117">
    <property type="term" value="P:nucleotide metabolic process"/>
    <property type="evidence" value="ECO:0007669"/>
    <property type="project" value="UniProtKB-KW"/>
</dbReference>
<dbReference type="CDD" id="cd00555">
    <property type="entry name" value="Maf"/>
    <property type="match status" value="1"/>
</dbReference>
<dbReference type="FunFam" id="3.90.950.10:FF:000005">
    <property type="entry name" value="7-methyl-GTP pyrophosphatase"/>
    <property type="match status" value="1"/>
</dbReference>
<dbReference type="Gene3D" id="3.90.950.10">
    <property type="match status" value="1"/>
</dbReference>
<dbReference type="HAMAP" id="MF_00528">
    <property type="entry name" value="Maf"/>
    <property type="match status" value="1"/>
</dbReference>
<dbReference type="InterPro" id="IPR029001">
    <property type="entry name" value="ITPase-like_fam"/>
</dbReference>
<dbReference type="InterPro" id="IPR003697">
    <property type="entry name" value="Maf-like"/>
</dbReference>
<dbReference type="NCBIfam" id="TIGR00172">
    <property type="entry name" value="maf"/>
    <property type="match status" value="1"/>
</dbReference>
<dbReference type="PANTHER" id="PTHR43213">
    <property type="entry name" value="BIFUNCTIONAL DTTP/UTP PYROPHOSPHATASE/METHYLTRANSFERASE PROTEIN-RELATED"/>
    <property type="match status" value="1"/>
</dbReference>
<dbReference type="PANTHER" id="PTHR43213:SF5">
    <property type="entry name" value="BIFUNCTIONAL DTTP_UTP PYROPHOSPHATASE_METHYLTRANSFERASE PROTEIN-RELATED"/>
    <property type="match status" value="1"/>
</dbReference>
<dbReference type="Pfam" id="PF02545">
    <property type="entry name" value="Maf"/>
    <property type="match status" value="1"/>
</dbReference>
<dbReference type="PIRSF" id="PIRSF006305">
    <property type="entry name" value="Maf"/>
    <property type="match status" value="1"/>
</dbReference>
<dbReference type="SUPFAM" id="SSF52972">
    <property type="entry name" value="ITPase-like"/>
    <property type="match status" value="1"/>
</dbReference>
<comment type="function">
    <text evidence="1">Nucleoside triphosphate pyrophosphatase that hydrolyzes dTTP and UTP. May have a dual role in cell division arrest and in preventing the incorporation of modified nucleotides into cellular nucleic acids.</text>
</comment>
<comment type="catalytic activity">
    <reaction evidence="1">
        <text>dTTP + H2O = dTMP + diphosphate + H(+)</text>
        <dbReference type="Rhea" id="RHEA:28534"/>
        <dbReference type="ChEBI" id="CHEBI:15377"/>
        <dbReference type="ChEBI" id="CHEBI:15378"/>
        <dbReference type="ChEBI" id="CHEBI:33019"/>
        <dbReference type="ChEBI" id="CHEBI:37568"/>
        <dbReference type="ChEBI" id="CHEBI:63528"/>
        <dbReference type="EC" id="3.6.1.9"/>
    </reaction>
</comment>
<comment type="catalytic activity">
    <reaction evidence="1">
        <text>UTP + H2O = UMP + diphosphate + H(+)</text>
        <dbReference type="Rhea" id="RHEA:29395"/>
        <dbReference type="ChEBI" id="CHEBI:15377"/>
        <dbReference type="ChEBI" id="CHEBI:15378"/>
        <dbReference type="ChEBI" id="CHEBI:33019"/>
        <dbReference type="ChEBI" id="CHEBI:46398"/>
        <dbReference type="ChEBI" id="CHEBI:57865"/>
        <dbReference type="EC" id="3.6.1.9"/>
    </reaction>
</comment>
<comment type="cofactor">
    <cofactor evidence="1">
        <name>a divalent metal cation</name>
        <dbReference type="ChEBI" id="CHEBI:60240"/>
    </cofactor>
</comment>
<comment type="subcellular location">
    <subcellularLocation>
        <location evidence="1">Cytoplasm</location>
    </subcellularLocation>
</comment>
<comment type="similarity">
    <text evidence="1">Belongs to the Maf family. YhdE subfamily.</text>
</comment>
<evidence type="ECO:0000255" key="1">
    <source>
        <dbReference type="HAMAP-Rule" id="MF_00528"/>
    </source>
</evidence>